<sequence length="1890" mass="210848">MADSQSGSNVFSLRIVSIDYYMASPIPGYNICYSSFQGSEVNEVPVIRIYGSTPAGQKTCLHIHRALPYLYIPCSEIPLEHHKGVDGSTLALSLELEKALKLKGNAASKRQHIHDCEIVRAKKFYGYHSTEEAFVKIYLSYHPPDVARAASLLLAGAVLGKSLQPYESHIPFILQFLVDYNLYGMGHVHISKMKFRSPVPHHFRPRRFDLDDCPGQRIDEVAITKANSSAAASVSFPVWSLSTIPGQWMWNLSEESDTPLSQSQHRHQHHYRRQSLCELEGDATSSDILNQQFKMYNSLSQAQSDTNMVQSLVAIWEEEYERTGVHDAPIPPDPGKPSAADVLQTMSDYVGFGNMLKEMLNKVELSPPGMKPTAVSSAGPDMHAKPEITDLQALNHMVGTCSEFPASEQLSPLGEKSEEASMENDEYMKTPTDRDTPAQIQDAEALGLFKWFASSQAAEDINSDDEILRETILSPLLPLASINKVLEMASTDYVSQSQKECQDILDSQENLPDFGSSTKRALPSNPDSQNLRTSSDKQSLEIEVASDVPDSSTSNGASENSFRRYRKSDLHTSEVMEYKNRSFSKSNKPSNSVWGPLPFTLTKNLQKDFDSTNASDKLGLTKISSYPMNEMTDNYIVPVKEHQADVCNTIDRNVLAGCSLRDLMRKKRLCHGESPVSQHMKSRKVRDSRHGEKNECTLRCEAKKQGPALSAEFSEFVCGDTPNLSPIDSGNCECNISTESSELHSVDRCSAKETASQNSDEVLRNLSSTTVPFGKDPQTVESGTLVSSNIHVGIEIDSVQKSGREQESTANETDETGRLICLTLSKKPPSLDCLSAGLQDSAHSHEIHAREKQHDEYEGNSNDIPFFPLEDNKEEKKHFFQGTSLGIPLHHLNDGSNLYLLTPAFSPPSVDSVLQWISNDKGDSNIDSEKQPLRDNHNDRGASFTDLASASNVVSVSEHVEQHNNLFVNSESNAYTESEIDLKPKGTFLNLNLQASVSQELSQISGPDGKSGPTPLSQMGFRDPASMGAGQQLTILSIEVHAESRGDLRPDPRFDSVNVIALVVQNDDSFVAEVFVLLFSPDSIDQRNVDGLSGCKLSVFLEERQLFRYFIETLCKWDPDVLLGWDIQGGSIGFLAERAAQLGIRFLNNISRTPSPTTTNNSDNKRKLGNNLLPDPLVANPAQVEEVVIEDEWGRTHASGVHVGGRIVLNAWRLIRGEVKLNMYTIEAVSEAVLRQKVPSIPYKVLTEWFSSGPAGARYRCIEYVIRRANLNLEIMSQLDMINRTSELARVFGIDFFSVLSRGSQYRVESMLLRLAHTQNYLAISPGNQQVASQPAMECVPLVMEPESAFYDDPVIVLDFQSLYPSMIIAYNLCFSTCLGKLAHLKMNTLGVSSYSLDLDVLQDLNQILQTPNSVMYVPPEVRRGILPRLLEEILSTRIMVKKAMKKLTPSEAVLHRIFNARQLALKLIANVTYGYTAAGFSGRMPCAELADSIVQCGRSTLEKAISFVNANDNWNARVVYGDTDSMFVLLKGRTVKEAFVVGQEIASAITEMNPHPVTLKMEKVYHPCFLLTKKRYVGYSYESPNQREPIFDAKGIETVRRDTCEAVAKTMEQSLRLFFEQKNISKVKSYLYRQWKRILSGRVSLQDFIFAKEVRLGTYSTRDSSLLPPAAIVATKSMKADPRTEPRYAERVPYVVIHGEPGARLVDMVVDPLVLLDVDTPYRLNDLYYINKQIIPALQRVFGLVGADLNQWFLEMPRLTRSSLGQRPLNSKNSHKTRIDYFYLSKHCILCGEVVQESAQLCNRCLQNKSAAAATIVWKTSKLEREMQHLATICRHCGGGDWVVQSGVKCNSLACSVFYERRKVQKELRGLSSIATESELYPKCMAEWF</sequence>
<keyword id="KW-0004">4Fe-4S</keyword>
<keyword id="KW-0025">Alternative splicing</keyword>
<keyword id="KW-0227">DNA damage</keyword>
<keyword id="KW-0234">DNA repair</keyword>
<keyword id="KW-0235">DNA replication</keyword>
<keyword id="KW-0238">DNA-binding</keyword>
<keyword id="KW-0239">DNA-directed DNA polymerase</keyword>
<keyword id="KW-0408">Iron</keyword>
<keyword id="KW-0411">Iron-sulfur</keyword>
<keyword id="KW-0479">Metal-binding</keyword>
<keyword id="KW-0548">Nucleotidyltransferase</keyword>
<keyword id="KW-0539">Nucleus</keyword>
<keyword id="KW-1185">Reference proteome</keyword>
<keyword id="KW-0808">Transferase</keyword>
<keyword id="KW-0862">Zinc</keyword>
<keyword id="KW-0863">Zinc-finger</keyword>
<protein>
    <recommendedName>
        <fullName>DNA polymerase zeta catalytic subunit</fullName>
        <ecNumber>2.7.7.7</ecNumber>
    </recommendedName>
    <alternativeName>
        <fullName>Protein reversionless 3-like</fullName>
        <shortName>AtREV3</shortName>
    </alternativeName>
</protein>
<dbReference type="EC" id="2.7.7.7"/>
<dbReference type="EMBL" id="AB114052">
    <property type="protein sequence ID" value="BAC82450.1"/>
    <property type="molecule type" value="mRNA"/>
</dbReference>
<dbReference type="EMBL" id="AC004393">
    <property type="protein sequence ID" value="AAC18785.1"/>
    <property type="status" value="ALT_SEQ"/>
    <property type="molecule type" value="Genomic_DNA"/>
</dbReference>
<dbReference type="EMBL" id="AC011020">
    <property type="protein sequence ID" value="AAG52299.1"/>
    <property type="status" value="ALT_SEQ"/>
    <property type="molecule type" value="Genomic_DNA"/>
</dbReference>
<dbReference type="EMBL" id="CP002684">
    <property type="protein sequence ID" value="AEE34655.1"/>
    <property type="molecule type" value="Genomic_DNA"/>
</dbReference>
<dbReference type="PIR" id="D96698">
    <property type="entry name" value="D96698"/>
</dbReference>
<dbReference type="PIR" id="T02155">
    <property type="entry name" value="T02155"/>
</dbReference>
<dbReference type="RefSeq" id="NP_176917.2">
    <molecule id="Q766Z3-1"/>
    <property type="nucleotide sequence ID" value="NM_105417.4"/>
</dbReference>
<dbReference type="SMR" id="Q766Z3"/>
<dbReference type="FunCoup" id="Q766Z3">
    <property type="interactions" value="3499"/>
</dbReference>
<dbReference type="STRING" id="3702.Q766Z3"/>
<dbReference type="GlyGen" id="Q766Z3">
    <property type="glycosylation" value="1 site"/>
</dbReference>
<dbReference type="iPTMnet" id="Q766Z3"/>
<dbReference type="PaxDb" id="3702-AT1G67500.2"/>
<dbReference type="ProteomicsDB" id="236920">
    <molecule id="Q766Z3-1"/>
</dbReference>
<dbReference type="EnsemblPlants" id="AT1G67500.1">
    <molecule id="Q766Z3-1"/>
    <property type="protein sequence ID" value="AT1G67500.1"/>
    <property type="gene ID" value="AT1G67500"/>
</dbReference>
<dbReference type="GeneID" id="843071"/>
<dbReference type="Gramene" id="AT1G67500.1">
    <molecule id="Q766Z3-1"/>
    <property type="protein sequence ID" value="AT1G67500.1"/>
    <property type="gene ID" value="AT1G67500"/>
</dbReference>
<dbReference type="KEGG" id="ath:AT1G67500"/>
<dbReference type="Araport" id="AT1G67500"/>
<dbReference type="TAIR" id="AT1G67500">
    <property type="gene designation" value="REV3"/>
</dbReference>
<dbReference type="eggNOG" id="KOG0968">
    <property type="taxonomic scope" value="Eukaryota"/>
</dbReference>
<dbReference type="HOGENOM" id="CLU_000203_3_0_1"/>
<dbReference type="InParanoid" id="Q766Z3"/>
<dbReference type="PhylomeDB" id="Q766Z3"/>
<dbReference type="PRO" id="PR:Q766Z3"/>
<dbReference type="Proteomes" id="UP000006548">
    <property type="component" value="Chromosome 1"/>
</dbReference>
<dbReference type="ExpressionAtlas" id="Q766Z3">
    <property type="expression patterns" value="baseline and differential"/>
</dbReference>
<dbReference type="GO" id="GO:0005634">
    <property type="term" value="C:nucleus"/>
    <property type="evidence" value="ECO:0007669"/>
    <property type="project" value="UniProtKB-SubCell"/>
</dbReference>
<dbReference type="GO" id="GO:0016035">
    <property type="term" value="C:zeta DNA polymerase complex"/>
    <property type="evidence" value="ECO:0007669"/>
    <property type="project" value="InterPro"/>
</dbReference>
<dbReference type="GO" id="GO:0051539">
    <property type="term" value="F:4 iron, 4 sulfur cluster binding"/>
    <property type="evidence" value="ECO:0007669"/>
    <property type="project" value="UniProtKB-KW"/>
</dbReference>
<dbReference type="GO" id="GO:0003677">
    <property type="term" value="F:DNA binding"/>
    <property type="evidence" value="ECO:0007669"/>
    <property type="project" value="UniProtKB-KW"/>
</dbReference>
<dbReference type="GO" id="GO:0003887">
    <property type="term" value="F:DNA-directed DNA polymerase activity"/>
    <property type="evidence" value="ECO:0007669"/>
    <property type="project" value="UniProtKB-KW"/>
</dbReference>
<dbReference type="GO" id="GO:0000166">
    <property type="term" value="F:nucleotide binding"/>
    <property type="evidence" value="ECO:0007669"/>
    <property type="project" value="InterPro"/>
</dbReference>
<dbReference type="GO" id="GO:0008270">
    <property type="term" value="F:zinc ion binding"/>
    <property type="evidence" value="ECO:0007669"/>
    <property type="project" value="UniProtKB-KW"/>
</dbReference>
<dbReference type="GO" id="GO:0071494">
    <property type="term" value="P:cellular response to UV-C"/>
    <property type="evidence" value="ECO:0000315"/>
    <property type="project" value="UniProtKB"/>
</dbReference>
<dbReference type="GO" id="GO:0006974">
    <property type="term" value="P:DNA damage response"/>
    <property type="evidence" value="ECO:0000315"/>
    <property type="project" value="UniProtKB"/>
</dbReference>
<dbReference type="GO" id="GO:0006260">
    <property type="term" value="P:DNA replication"/>
    <property type="evidence" value="ECO:0007669"/>
    <property type="project" value="UniProtKB-KW"/>
</dbReference>
<dbReference type="GO" id="GO:0019985">
    <property type="term" value="P:translesion synthesis"/>
    <property type="evidence" value="ECO:0007669"/>
    <property type="project" value="InterPro"/>
</dbReference>
<dbReference type="CDD" id="cd05778">
    <property type="entry name" value="DNA_polB_zeta_exo"/>
    <property type="match status" value="1"/>
</dbReference>
<dbReference type="CDD" id="cd05534">
    <property type="entry name" value="POLBc_zeta"/>
    <property type="match status" value="1"/>
</dbReference>
<dbReference type="FunFam" id="1.10.132.60:FF:000007">
    <property type="entry name" value="DNA polymerase"/>
    <property type="match status" value="1"/>
</dbReference>
<dbReference type="FunFam" id="3.30.342.10:FF:000014">
    <property type="entry name" value="DNA polymerase"/>
    <property type="match status" value="1"/>
</dbReference>
<dbReference type="FunFam" id="3.30.420.10:FF:000082">
    <property type="entry name" value="DNA polymerase"/>
    <property type="match status" value="1"/>
</dbReference>
<dbReference type="FunFam" id="1.10.287.690:FF:000002">
    <property type="entry name" value="DNA polymerase zeta"/>
    <property type="match status" value="1"/>
</dbReference>
<dbReference type="Gene3D" id="1.10.132.60">
    <property type="entry name" value="DNA polymerase family B, C-terminal domain"/>
    <property type="match status" value="1"/>
</dbReference>
<dbReference type="Gene3D" id="3.30.342.10">
    <property type="entry name" value="DNA Polymerase, chain B, domain 1"/>
    <property type="match status" value="1"/>
</dbReference>
<dbReference type="Gene3D" id="1.10.287.690">
    <property type="entry name" value="Helix hairpin bin"/>
    <property type="match status" value="1"/>
</dbReference>
<dbReference type="Gene3D" id="3.90.1600.10">
    <property type="entry name" value="Palm domain of DNA polymerase"/>
    <property type="match status" value="1"/>
</dbReference>
<dbReference type="Gene3D" id="3.30.420.10">
    <property type="entry name" value="Ribonuclease H-like superfamily/Ribonuclease H"/>
    <property type="match status" value="1"/>
</dbReference>
<dbReference type="InterPro" id="IPR006172">
    <property type="entry name" value="DNA-dir_DNA_pol_B"/>
</dbReference>
<dbReference type="InterPro" id="IPR017964">
    <property type="entry name" value="DNA-dir_DNA_pol_B_CS"/>
</dbReference>
<dbReference type="InterPro" id="IPR006133">
    <property type="entry name" value="DNA-dir_DNA_pol_B_exonuc"/>
</dbReference>
<dbReference type="InterPro" id="IPR006134">
    <property type="entry name" value="DNA-dir_DNA_pol_B_multi_dom"/>
</dbReference>
<dbReference type="InterPro" id="IPR043502">
    <property type="entry name" value="DNA/RNA_pol_sf"/>
</dbReference>
<dbReference type="InterPro" id="IPR042087">
    <property type="entry name" value="DNA_pol_B_thumb"/>
</dbReference>
<dbReference type="InterPro" id="IPR023211">
    <property type="entry name" value="DNA_pol_palm_dom_sf"/>
</dbReference>
<dbReference type="InterPro" id="IPR056435">
    <property type="entry name" value="DPOD/Z_N"/>
</dbReference>
<dbReference type="InterPro" id="IPR030559">
    <property type="entry name" value="PolZ_Rev3"/>
</dbReference>
<dbReference type="InterPro" id="IPR056447">
    <property type="entry name" value="REV3_N"/>
</dbReference>
<dbReference type="InterPro" id="IPR012337">
    <property type="entry name" value="RNaseH-like_sf"/>
</dbReference>
<dbReference type="InterPro" id="IPR036397">
    <property type="entry name" value="RNaseH_sf"/>
</dbReference>
<dbReference type="InterPro" id="IPR025687">
    <property type="entry name" value="Znf-C4pol"/>
</dbReference>
<dbReference type="PANTHER" id="PTHR45812">
    <property type="entry name" value="DNA POLYMERASE ZETA CATALYTIC SUBUNIT"/>
    <property type="match status" value="1"/>
</dbReference>
<dbReference type="PANTHER" id="PTHR45812:SF1">
    <property type="entry name" value="DNA POLYMERASE ZETA CATALYTIC SUBUNIT"/>
    <property type="match status" value="1"/>
</dbReference>
<dbReference type="Pfam" id="PF00136">
    <property type="entry name" value="DNA_pol_B"/>
    <property type="match status" value="1"/>
</dbReference>
<dbReference type="Pfam" id="PF03104">
    <property type="entry name" value="DNA_pol_B_exo1"/>
    <property type="match status" value="1"/>
</dbReference>
<dbReference type="Pfam" id="PF24055">
    <property type="entry name" value="POL3_N"/>
    <property type="match status" value="1"/>
</dbReference>
<dbReference type="Pfam" id="PF24065">
    <property type="entry name" value="REV3_N"/>
    <property type="match status" value="1"/>
</dbReference>
<dbReference type="Pfam" id="PF14260">
    <property type="entry name" value="zf-C4pol"/>
    <property type="match status" value="1"/>
</dbReference>
<dbReference type="PRINTS" id="PR00106">
    <property type="entry name" value="DNAPOLB"/>
</dbReference>
<dbReference type="SMART" id="SM00486">
    <property type="entry name" value="POLBc"/>
    <property type="match status" value="1"/>
</dbReference>
<dbReference type="SUPFAM" id="SSF56672">
    <property type="entry name" value="DNA/RNA polymerases"/>
    <property type="match status" value="1"/>
</dbReference>
<dbReference type="SUPFAM" id="SSF53098">
    <property type="entry name" value="Ribonuclease H-like"/>
    <property type="match status" value="1"/>
</dbReference>
<dbReference type="PROSITE" id="PS00116">
    <property type="entry name" value="DNA_POLYMERASE_B"/>
    <property type="match status" value="1"/>
</dbReference>
<name>REV3_ARATH</name>
<evidence type="ECO:0000250" key="1"/>
<evidence type="ECO:0000256" key="2">
    <source>
        <dbReference type="SAM" id="MobiDB-lite"/>
    </source>
</evidence>
<evidence type="ECO:0000269" key="3">
    <source>
    </source>
</evidence>
<evidence type="ECO:0000269" key="4">
    <source>
    </source>
</evidence>
<evidence type="ECO:0000269" key="5">
    <source>
    </source>
</evidence>
<evidence type="ECO:0000269" key="6">
    <source>
    </source>
</evidence>
<evidence type="ECO:0000305" key="7"/>
<organism>
    <name type="scientific">Arabidopsis thaliana</name>
    <name type="common">Mouse-ear cress</name>
    <dbReference type="NCBI Taxonomy" id="3702"/>
    <lineage>
        <taxon>Eukaryota</taxon>
        <taxon>Viridiplantae</taxon>
        <taxon>Streptophyta</taxon>
        <taxon>Embryophyta</taxon>
        <taxon>Tracheophyta</taxon>
        <taxon>Spermatophyta</taxon>
        <taxon>Magnoliopsida</taxon>
        <taxon>eudicotyledons</taxon>
        <taxon>Gunneridae</taxon>
        <taxon>Pentapetalae</taxon>
        <taxon>rosids</taxon>
        <taxon>malvids</taxon>
        <taxon>Brassicales</taxon>
        <taxon>Brassicaceae</taxon>
        <taxon>Camelineae</taxon>
        <taxon>Arabidopsis</taxon>
    </lineage>
</organism>
<accession>Q766Z3</accession>
<accession>O64795</accession>
<accession>Q9CAG6</accession>
<reference key="1">
    <citation type="journal article" date="2003" name="Plant Cell">
        <title>Disruption of the AtREV3 gene causes hypersensitivity to ultraviolet B light and gamma-rays in Arabidopsis: implication of the presence of a translesion synthesis mechanism in plants.</title>
        <authorList>
            <person name="Sakamoto A."/>
            <person name="Vo L.T."/>
            <person name="Hase Y."/>
            <person name="Shikazono N."/>
            <person name="Matsunaga T."/>
            <person name="Tanaka A."/>
        </authorList>
    </citation>
    <scope>NUCLEOTIDE SEQUENCE [MRNA]</scope>
    <scope>FUNCTION</scope>
    <scope>TISSUE SPECIFICITY</scope>
    <scope>DISRUPTION PHENOTYPE</scope>
</reference>
<reference key="2">
    <citation type="journal article" date="2000" name="Nature">
        <title>Sequence and analysis of chromosome 1 of the plant Arabidopsis thaliana.</title>
        <authorList>
            <person name="Theologis A."/>
            <person name="Ecker J.R."/>
            <person name="Palm C.J."/>
            <person name="Federspiel N.A."/>
            <person name="Kaul S."/>
            <person name="White O."/>
            <person name="Alonso J."/>
            <person name="Altafi H."/>
            <person name="Araujo R."/>
            <person name="Bowman C.L."/>
            <person name="Brooks S.Y."/>
            <person name="Buehler E."/>
            <person name="Chan A."/>
            <person name="Chao Q."/>
            <person name="Chen H."/>
            <person name="Cheuk R.F."/>
            <person name="Chin C.W."/>
            <person name="Chung M.K."/>
            <person name="Conn L."/>
            <person name="Conway A.B."/>
            <person name="Conway A.R."/>
            <person name="Creasy T.H."/>
            <person name="Dewar K."/>
            <person name="Dunn P."/>
            <person name="Etgu P."/>
            <person name="Feldblyum T.V."/>
            <person name="Feng J.-D."/>
            <person name="Fong B."/>
            <person name="Fujii C.Y."/>
            <person name="Gill J.E."/>
            <person name="Goldsmith A.D."/>
            <person name="Haas B."/>
            <person name="Hansen N.F."/>
            <person name="Hughes B."/>
            <person name="Huizar L."/>
            <person name="Hunter J.L."/>
            <person name="Jenkins J."/>
            <person name="Johnson-Hopson C."/>
            <person name="Khan S."/>
            <person name="Khaykin E."/>
            <person name="Kim C.J."/>
            <person name="Koo H.L."/>
            <person name="Kremenetskaia I."/>
            <person name="Kurtz D.B."/>
            <person name="Kwan A."/>
            <person name="Lam B."/>
            <person name="Langin-Hooper S."/>
            <person name="Lee A."/>
            <person name="Lee J.M."/>
            <person name="Lenz C.A."/>
            <person name="Li J.H."/>
            <person name="Li Y.-P."/>
            <person name="Lin X."/>
            <person name="Liu S.X."/>
            <person name="Liu Z.A."/>
            <person name="Luros J.S."/>
            <person name="Maiti R."/>
            <person name="Marziali A."/>
            <person name="Militscher J."/>
            <person name="Miranda M."/>
            <person name="Nguyen M."/>
            <person name="Nierman W.C."/>
            <person name="Osborne B.I."/>
            <person name="Pai G."/>
            <person name="Peterson J."/>
            <person name="Pham P.K."/>
            <person name="Rizzo M."/>
            <person name="Rooney T."/>
            <person name="Rowley D."/>
            <person name="Sakano H."/>
            <person name="Salzberg S.L."/>
            <person name="Schwartz J.R."/>
            <person name="Shinn P."/>
            <person name="Southwick A.M."/>
            <person name="Sun H."/>
            <person name="Tallon L.J."/>
            <person name="Tambunga G."/>
            <person name="Toriumi M.J."/>
            <person name="Town C.D."/>
            <person name="Utterback T."/>
            <person name="Van Aken S."/>
            <person name="Vaysberg M."/>
            <person name="Vysotskaia V.S."/>
            <person name="Walker M."/>
            <person name="Wu D."/>
            <person name="Yu G."/>
            <person name="Fraser C.M."/>
            <person name="Venter J.C."/>
            <person name="Davis R.W."/>
        </authorList>
    </citation>
    <scope>NUCLEOTIDE SEQUENCE [LARGE SCALE GENOMIC DNA]</scope>
    <source>
        <strain>cv. Columbia</strain>
    </source>
</reference>
<reference key="3">
    <citation type="journal article" date="2017" name="Plant J.">
        <title>Araport11: a complete reannotation of the Arabidopsis thaliana reference genome.</title>
        <authorList>
            <person name="Cheng C.Y."/>
            <person name="Krishnakumar V."/>
            <person name="Chan A.P."/>
            <person name="Thibaud-Nissen F."/>
            <person name="Schobel S."/>
            <person name="Town C.D."/>
        </authorList>
    </citation>
    <scope>GENOME REANNOTATION</scope>
    <source>
        <strain>cv. Columbia</strain>
    </source>
</reference>
<reference key="4">
    <citation type="journal article" date="2005" name="Plant Physiol.">
        <title>Roles of Arabidopsis AtREV1 and AtREV7 in translesion synthesis.</title>
        <authorList>
            <person name="Takahashi S."/>
            <person name="Sakamoto A."/>
            <person name="Sato S."/>
            <person name="Kato T."/>
            <person name="Tabata S."/>
            <person name="Tanaka A."/>
        </authorList>
    </citation>
    <scope>FUNCTION</scope>
</reference>
<reference key="5">
    <citation type="journal article" date="2011" name="Plant Physiol.">
        <title>Role of AtPolzeta, AtRev1, and AtPoleta in UV light-induced mutagenesis in Arabidopsis.</title>
        <authorList>
            <person name="Nakagawa M."/>
            <person name="Takahashi S."/>
            <person name="Tanaka A."/>
            <person name="Narumi I."/>
            <person name="Sakamoto A.N."/>
        </authorList>
    </citation>
    <scope>FUNCTION</scope>
</reference>
<reference key="6">
    <citation type="journal article" date="2011" name="DNA Repair">
        <title>RAD5a and REV3 function in two alternative pathways of DNA-damage tolerance in Arabidopsis.</title>
        <authorList>
            <person name="Wang S."/>
            <person name="Wen R."/>
            <person name="Shi X."/>
            <person name="Lambrecht A."/>
            <person name="Wang H."/>
            <person name="Xiao W."/>
        </authorList>
    </citation>
    <scope>FUNCTION</scope>
</reference>
<gene>
    <name type="primary">REV3</name>
    <name type="ordered locus">At1g67500</name>
    <name type="ORF">F12B7.5</name>
    <name type="ORF">T1F15.3</name>
</gene>
<comment type="function">
    <text evidence="3 4 5 6">Catalytic subunit of the error prone DNA polymerase zeta. Involved in damage-tolerance mechanisms through translesion DNA synthesis.</text>
</comment>
<comment type="catalytic activity">
    <reaction>
        <text>DNA(n) + a 2'-deoxyribonucleoside 5'-triphosphate = DNA(n+1) + diphosphate</text>
        <dbReference type="Rhea" id="RHEA:22508"/>
        <dbReference type="Rhea" id="RHEA-COMP:17339"/>
        <dbReference type="Rhea" id="RHEA-COMP:17340"/>
        <dbReference type="ChEBI" id="CHEBI:33019"/>
        <dbReference type="ChEBI" id="CHEBI:61560"/>
        <dbReference type="ChEBI" id="CHEBI:173112"/>
        <dbReference type="EC" id="2.7.7.7"/>
    </reaction>
</comment>
<comment type="cofactor">
    <cofactor>
        <name>[4Fe-4S] cluster</name>
        <dbReference type="ChEBI" id="CHEBI:49883"/>
    </cofactor>
    <text>Binds 1 [4Fe-4S] cluster.</text>
</comment>
<comment type="subunit">
    <text evidence="1">Forms DNA polymerase zeta with REV7.</text>
</comment>
<comment type="subcellular location">
    <subcellularLocation>
        <location evidence="7">Nucleus</location>
    </subcellularLocation>
</comment>
<comment type="alternative products">
    <event type="alternative splicing"/>
    <isoform>
        <id>Q766Z3-1</id>
        <name>1</name>
        <sequence type="displayed"/>
    </isoform>
    <text>A number of isoforms are produced. According to EST sequences.</text>
</comment>
<comment type="tissue specificity">
    <text evidence="3">Expressed in roots, leaves and flowers.</text>
</comment>
<comment type="domain">
    <text evidence="1">The CysB motif binds 1 4Fe-4S cluster and is required for the formation of polymerase complexes.</text>
</comment>
<comment type="disruption phenotype">
    <text evidence="3">No visible phenotype under normal growth conditions, but mutant plants are hypersensitive to UV-B light and gamma rays.</text>
</comment>
<comment type="similarity">
    <text evidence="7">Belongs to the DNA polymerase type-B family.</text>
</comment>
<comment type="sequence caution" evidence="7">
    <conflict type="erroneous gene model prediction">
        <sequence resource="EMBL-CDS" id="AAC18785"/>
    </conflict>
</comment>
<comment type="sequence caution" evidence="7">
    <conflict type="erroneous gene model prediction">
        <sequence resource="EMBL-CDS" id="AAG52299"/>
    </conflict>
</comment>
<proteinExistence type="evidence at transcript level"/>
<feature type="chain" id="PRO_0000424418" description="DNA polymerase zeta catalytic subunit">
    <location>
        <begin position="1"/>
        <end position="1890"/>
    </location>
</feature>
<feature type="zinc finger region" description="CysA-type" evidence="1">
    <location>
        <begin position="1789"/>
        <end position="1806"/>
    </location>
</feature>
<feature type="region of interest" description="Disordered" evidence="2">
    <location>
        <begin position="508"/>
        <end position="565"/>
    </location>
</feature>
<feature type="region of interest" description="Disordered" evidence="2">
    <location>
        <begin position="922"/>
        <end position="942"/>
    </location>
</feature>
<feature type="short sequence motif" description="CysB motif" evidence="1">
    <location>
        <begin position="1835"/>
        <end position="1856"/>
    </location>
</feature>
<feature type="compositionally biased region" description="Polar residues" evidence="2">
    <location>
        <begin position="508"/>
        <end position="533"/>
    </location>
</feature>
<feature type="compositionally biased region" description="Polar residues" evidence="2">
    <location>
        <begin position="549"/>
        <end position="560"/>
    </location>
</feature>
<feature type="compositionally biased region" description="Basic and acidic residues" evidence="2">
    <location>
        <begin position="922"/>
        <end position="940"/>
    </location>
</feature>
<feature type="binding site" evidence="1">
    <location>
        <position position="1789"/>
    </location>
    <ligand>
        <name>Zn(2+)</name>
        <dbReference type="ChEBI" id="CHEBI:29105"/>
    </ligand>
</feature>
<feature type="binding site" evidence="1">
    <location>
        <position position="1792"/>
    </location>
    <ligand>
        <name>Zn(2+)</name>
        <dbReference type="ChEBI" id="CHEBI:29105"/>
    </ligand>
</feature>
<feature type="binding site" evidence="1">
    <location>
        <position position="1803"/>
    </location>
    <ligand>
        <name>Zn(2+)</name>
        <dbReference type="ChEBI" id="CHEBI:29105"/>
    </ligand>
</feature>
<feature type="binding site" evidence="1">
    <location>
        <position position="1806"/>
    </location>
    <ligand>
        <name>Zn(2+)</name>
        <dbReference type="ChEBI" id="CHEBI:29105"/>
    </ligand>
</feature>
<feature type="binding site" evidence="1">
    <location>
        <position position="1835"/>
    </location>
    <ligand>
        <name>[4Fe-4S] cluster</name>
        <dbReference type="ChEBI" id="CHEBI:49883"/>
    </ligand>
</feature>
<feature type="binding site" evidence="1">
    <location>
        <position position="1838"/>
    </location>
    <ligand>
        <name>[4Fe-4S] cluster</name>
        <dbReference type="ChEBI" id="CHEBI:49883"/>
    </ligand>
</feature>
<feature type="binding site" evidence="1">
    <location>
        <position position="1851"/>
    </location>
    <ligand>
        <name>[4Fe-4S] cluster</name>
        <dbReference type="ChEBI" id="CHEBI:49883"/>
    </ligand>
</feature>
<feature type="binding site" evidence="1">
    <location>
        <position position="1856"/>
    </location>
    <ligand>
        <name>[4Fe-4S] cluster</name>
        <dbReference type="ChEBI" id="CHEBI:49883"/>
    </ligand>
</feature>